<sequence>MGAMRRMEAAKGAIISLLLDAYQKRNKIGMIAFRKDKAELILPFTSSVELGEKLLKDLPTGGKTPLADAFIKSYEVFDREIRKNPNIIPIMIVISDFKPNVAVKEDYVKEVFDACEKIAEKGINVILIDTEPQSFIKIGIGKEIANRFGFKYYKIEELSKDKILDICKSLEINF</sequence>
<organism>
    <name type="scientific">Methanocaldococcus jannaschii (strain ATCC 43067 / DSM 2661 / JAL-1 / JCM 10045 / NBRC 100440)</name>
    <name type="common">Methanococcus jannaschii</name>
    <dbReference type="NCBI Taxonomy" id="243232"/>
    <lineage>
        <taxon>Archaea</taxon>
        <taxon>Methanobacteriati</taxon>
        <taxon>Methanobacteriota</taxon>
        <taxon>Methanomada group</taxon>
        <taxon>Methanococci</taxon>
        <taxon>Methanococcales</taxon>
        <taxon>Methanocaldococcaceae</taxon>
        <taxon>Methanocaldococcus</taxon>
    </lineage>
</organism>
<gene>
    <name type="ordered locus">MJ0910</name>
</gene>
<proteinExistence type="predicted"/>
<protein>
    <recommendedName>
        <fullName>Uncharacterized protein MJ0910</fullName>
    </recommendedName>
</protein>
<accession>Q58320</accession>
<reference key="1">
    <citation type="journal article" date="1996" name="Science">
        <title>Complete genome sequence of the methanogenic archaeon, Methanococcus jannaschii.</title>
        <authorList>
            <person name="Bult C.J."/>
            <person name="White O."/>
            <person name="Olsen G.J."/>
            <person name="Zhou L."/>
            <person name="Fleischmann R.D."/>
            <person name="Sutton G.G."/>
            <person name="Blake J.A."/>
            <person name="FitzGerald L.M."/>
            <person name="Clayton R.A."/>
            <person name="Gocayne J.D."/>
            <person name="Kerlavage A.R."/>
            <person name="Dougherty B.A."/>
            <person name="Tomb J.-F."/>
            <person name="Adams M.D."/>
            <person name="Reich C.I."/>
            <person name="Overbeek R."/>
            <person name="Kirkness E.F."/>
            <person name="Weinstock K.G."/>
            <person name="Merrick J.M."/>
            <person name="Glodek A."/>
            <person name="Scott J.L."/>
            <person name="Geoghagen N.S.M."/>
            <person name="Weidman J.F."/>
            <person name="Fuhrmann J.L."/>
            <person name="Nguyen D."/>
            <person name="Utterback T.R."/>
            <person name="Kelley J.M."/>
            <person name="Peterson J.D."/>
            <person name="Sadow P.W."/>
            <person name="Hanna M.C."/>
            <person name="Cotton M.D."/>
            <person name="Roberts K.M."/>
            <person name="Hurst M.A."/>
            <person name="Kaine B.P."/>
            <person name="Borodovsky M."/>
            <person name="Klenk H.-P."/>
            <person name="Fraser C.M."/>
            <person name="Smith H.O."/>
            <person name="Woese C.R."/>
            <person name="Venter J.C."/>
        </authorList>
    </citation>
    <scope>NUCLEOTIDE SEQUENCE [LARGE SCALE GENOMIC DNA]</scope>
    <source>
        <strain>ATCC 43067 / DSM 2661 / JAL-1 / JCM 10045 / NBRC 100440</strain>
    </source>
</reference>
<dbReference type="EMBL" id="L77117">
    <property type="protein sequence ID" value="AAB98912.1"/>
    <property type="molecule type" value="Genomic_DNA"/>
</dbReference>
<dbReference type="PIR" id="F64413">
    <property type="entry name" value="F64413"/>
</dbReference>
<dbReference type="RefSeq" id="WP_010870424.1">
    <property type="nucleotide sequence ID" value="NC_000909.1"/>
</dbReference>
<dbReference type="SMR" id="Q58320"/>
<dbReference type="STRING" id="243232.MJ_0910"/>
<dbReference type="PaxDb" id="243232-MJ_0910"/>
<dbReference type="EnsemblBacteria" id="AAB98912">
    <property type="protein sequence ID" value="AAB98912"/>
    <property type="gene ID" value="MJ_0910"/>
</dbReference>
<dbReference type="GeneID" id="95970029"/>
<dbReference type="KEGG" id="mja:MJ_0910"/>
<dbReference type="eggNOG" id="arCOG06472">
    <property type="taxonomic scope" value="Archaea"/>
</dbReference>
<dbReference type="HOGENOM" id="CLU_016684_2_1_2"/>
<dbReference type="InParanoid" id="Q58320"/>
<dbReference type="Proteomes" id="UP000000805">
    <property type="component" value="Chromosome"/>
</dbReference>
<dbReference type="Gene3D" id="3.40.50.410">
    <property type="entry name" value="von Willebrand factor, type A domain"/>
    <property type="match status" value="1"/>
</dbReference>
<dbReference type="InterPro" id="IPR052989">
    <property type="entry name" value="Mg-chelatase_DI-like"/>
</dbReference>
<dbReference type="InterPro" id="IPR002035">
    <property type="entry name" value="VWF_A"/>
</dbReference>
<dbReference type="InterPro" id="IPR036465">
    <property type="entry name" value="vWFA_dom_sf"/>
</dbReference>
<dbReference type="PANTHER" id="PTHR35023">
    <property type="entry name" value="CHELATASE-RELATED"/>
    <property type="match status" value="1"/>
</dbReference>
<dbReference type="PANTHER" id="PTHR35023:SF1">
    <property type="entry name" value="MG-PROTOPORPHYRIN IX CHELATASE"/>
    <property type="match status" value="1"/>
</dbReference>
<dbReference type="Pfam" id="PF13519">
    <property type="entry name" value="VWA_2"/>
    <property type="match status" value="1"/>
</dbReference>
<dbReference type="SMART" id="SM00327">
    <property type="entry name" value="VWA"/>
    <property type="match status" value="1"/>
</dbReference>
<dbReference type="SUPFAM" id="SSF53300">
    <property type="entry name" value="vWA-like"/>
    <property type="match status" value="1"/>
</dbReference>
<feature type="chain" id="PRO_0000107100" description="Uncharacterized protein MJ0910">
    <location>
        <begin position="1"/>
        <end position="174"/>
    </location>
</feature>
<keyword id="KW-1185">Reference proteome</keyword>
<name>Y910_METJA</name>